<organism>
    <name type="scientific">Escherichia coli O8 (strain IAI1)</name>
    <dbReference type="NCBI Taxonomy" id="585034"/>
    <lineage>
        <taxon>Bacteria</taxon>
        <taxon>Pseudomonadati</taxon>
        <taxon>Pseudomonadota</taxon>
        <taxon>Gammaproteobacteria</taxon>
        <taxon>Enterobacterales</taxon>
        <taxon>Enterobacteriaceae</taxon>
        <taxon>Escherichia</taxon>
    </lineage>
</organism>
<dbReference type="EC" id="3.4.11.23" evidence="1"/>
<dbReference type="EMBL" id="CU928160">
    <property type="protein sequence ID" value="CAQ99414.1"/>
    <property type="molecule type" value="Genomic_DNA"/>
</dbReference>
<dbReference type="RefSeq" id="WP_000133582.1">
    <property type="nucleotide sequence ID" value="NC_011741.1"/>
</dbReference>
<dbReference type="SMR" id="B7M7M6"/>
<dbReference type="MEROPS" id="M17.004"/>
<dbReference type="GeneID" id="93774613"/>
<dbReference type="KEGG" id="ecr:ECIAI1_2575"/>
<dbReference type="HOGENOM" id="CLU_013734_7_1_6"/>
<dbReference type="GO" id="GO:0005737">
    <property type="term" value="C:cytoplasm"/>
    <property type="evidence" value="ECO:0007669"/>
    <property type="project" value="UniProtKB-SubCell"/>
</dbReference>
<dbReference type="GO" id="GO:0030145">
    <property type="term" value="F:manganese ion binding"/>
    <property type="evidence" value="ECO:0007669"/>
    <property type="project" value="UniProtKB-UniRule"/>
</dbReference>
<dbReference type="GO" id="GO:0070006">
    <property type="term" value="F:metalloaminopeptidase activity"/>
    <property type="evidence" value="ECO:0007669"/>
    <property type="project" value="InterPro"/>
</dbReference>
<dbReference type="GO" id="GO:0006508">
    <property type="term" value="P:proteolysis"/>
    <property type="evidence" value="ECO:0007669"/>
    <property type="project" value="UniProtKB-UniRule"/>
</dbReference>
<dbReference type="CDD" id="cd00433">
    <property type="entry name" value="Peptidase_M17"/>
    <property type="match status" value="1"/>
</dbReference>
<dbReference type="FunFam" id="3.40.630.10:FF:000037">
    <property type="entry name" value="Peptidase B"/>
    <property type="match status" value="1"/>
</dbReference>
<dbReference type="Gene3D" id="3.40.630.10">
    <property type="entry name" value="Zn peptidases"/>
    <property type="match status" value="1"/>
</dbReference>
<dbReference type="HAMAP" id="MF_00504">
    <property type="entry name" value="Aminopeptidase_M17"/>
    <property type="match status" value="1"/>
</dbReference>
<dbReference type="InterPro" id="IPR011356">
    <property type="entry name" value="Leucine_aapep/pepB"/>
</dbReference>
<dbReference type="InterPro" id="IPR047620">
    <property type="entry name" value="M17_PepB-like_N"/>
</dbReference>
<dbReference type="InterPro" id="IPR008330">
    <property type="entry name" value="Pept_M17_PepB"/>
</dbReference>
<dbReference type="InterPro" id="IPR000819">
    <property type="entry name" value="Peptidase_M17_C"/>
</dbReference>
<dbReference type="NCBIfam" id="NF003450">
    <property type="entry name" value="PRK05015.1"/>
    <property type="match status" value="1"/>
</dbReference>
<dbReference type="PANTHER" id="PTHR11963">
    <property type="entry name" value="LEUCINE AMINOPEPTIDASE-RELATED"/>
    <property type="match status" value="1"/>
</dbReference>
<dbReference type="PANTHER" id="PTHR11963:SF20">
    <property type="entry name" value="PEPTIDASE B"/>
    <property type="match status" value="1"/>
</dbReference>
<dbReference type="Pfam" id="PF12404">
    <property type="entry name" value="DUF3663"/>
    <property type="match status" value="1"/>
</dbReference>
<dbReference type="Pfam" id="PF00883">
    <property type="entry name" value="Peptidase_M17"/>
    <property type="match status" value="1"/>
</dbReference>
<dbReference type="PIRSF" id="PIRSF036388">
    <property type="entry name" value="Ctsl_amnpptdse_B"/>
    <property type="match status" value="1"/>
</dbReference>
<dbReference type="PRINTS" id="PR00481">
    <property type="entry name" value="LAMNOPPTDASE"/>
</dbReference>
<dbReference type="SUPFAM" id="SSF53187">
    <property type="entry name" value="Zn-dependent exopeptidases"/>
    <property type="match status" value="1"/>
</dbReference>
<dbReference type="PROSITE" id="PS00631">
    <property type="entry name" value="CYTOSOL_AP"/>
    <property type="match status" value="1"/>
</dbReference>
<sequence length="427" mass="46226">MTEAMKITLSTQPADARWGEKATYSINNDGITLHLNGADDLGLIQRAARKIDGLGIKHVQLSGEGWDADRCWAFWQGYKAPKGTRKVEWPDLDDAQRQELDNRLMIIDWVRDTINAPAEELGPSQLAQRAVDLISNVAGDRVTYRITKGEDLREQGYMGLHTVGRGSERSPVLLALDYNPTGDKEAPVYACLVGKGITFDSGGYSIKQTAFMDSMKSDMGGAATVTGALAFAITRGLNKRVKLFLCCADNLISGNAFKLGDIITYRNGKKVEVMNTDAEGRLVLADGLIDASAQKPEMIIDAATLTGAAKTALGNDYHALFSFDDALAGRLLASASQENEPFWRLPLAEFHRSQLPSNFAELNNTGSAAYPAGASTAAGFLSHFVENYQQGWLHIDCSATYRKAPVEQWSAGATGLGVRTIANLLTA</sequence>
<proteinExistence type="inferred from homology"/>
<accession>B7M7M6</accession>
<comment type="function">
    <text evidence="1">Probably plays an important role in intracellular peptide degradation.</text>
</comment>
<comment type="catalytic activity">
    <reaction evidence="1">
        <text>Release of an N-terminal amino acid, Xaa, from a peptide or arylamide. Xaa is preferably Glu or Asp but may be other amino acids, including Leu, Met, His, Cys and Gln.</text>
        <dbReference type="EC" id="3.4.11.23"/>
    </reaction>
</comment>
<comment type="cofactor">
    <cofactor evidence="1">
        <name>Mn(2+)</name>
        <dbReference type="ChEBI" id="CHEBI:29035"/>
    </cofactor>
    <text evidence="1">Binds 2 manganese ions per subunit.</text>
</comment>
<comment type="subunit">
    <text evidence="1">Homohexamer.</text>
</comment>
<comment type="subcellular location">
    <subcellularLocation>
        <location evidence="1">Cytoplasm</location>
    </subcellularLocation>
</comment>
<comment type="similarity">
    <text evidence="1">Belongs to the peptidase M17 family.</text>
</comment>
<keyword id="KW-0031">Aminopeptidase</keyword>
<keyword id="KW-0963">Cytoplasm</keyword>
<keyword id="KW-0378">Hydrolase</keyword>
<keyword id="KW-0464">Manganese</keyword>
<keyword id="KW-0479">Metal-binding</keyword>
<keyword id="KW-0645">Protease</keyword>
<reference key="1">
    <citation type="journal article" date="2009" name="PLoS Genet.">
        <title>Organised genome dynamics in the Escherichia coli species results in highly diverse adaptive paths.</title>
        <authorList>
            <person name="Touchon M."/>
            <person name="Hoede C."/>
            <person name="Tenaillon O."/>
            <person name="Barbe V."/>
            <person name="Baeriswyl S."/>
            <person name="Bidet P."/>
            <person name="Bingen E."/>
            <person name="Bonacorsi S."/>
            <person name="Bouchier C."/>
            <person name="Bouvet O."/>
            <person name="Calteau A."/>
            <person name="Chiapello H."/>
            <person name="Clermont O."/>
            <person name="Cruveiller S."/>
            <person name="Danchin A."/>
            <person name="Diard M."/>
            <person name="Dossat C."/>
            <person name="Karoui M.E."/>
            <person name="Frapy E."/>
            <person name="Garry L."/>
            <person name="Ghigo J.M."/>
            <person name="Gilles A.M."/>
            <person name="Johnson J."/>
            <person name="Le Bouguenec C."/>
            <person name="Lescat M."/>
            <person name="Mangenot S."/>
            <person name="Martinez-Jehanne V."/>
            <person name="Matic I."/>
            <person name="Nassif X."/>
            <person name="Oztas S."/>
            <person name="Petit M.A."/>
            <person name="Pichon C."/>
            <person name="Rouy Z."/>
            <person name="Ruf C.S."/>
            <person name="Schneider D."/>
            <person name="Tourret J."/>
            <person name="Vacherie B."/>
            <person name="Vallenet D."/>
            <person name="Medigue C."/>
            <person name="Rocha E.P.C."/>
            <person name="Denamur E."/>
        </authorList>
    </citation>
    <scope>NUCLEOTIDE SEQUENCE [LARGE SCALE GENOMIC DNA]</scope>
    <source>
        <strain>IAI1</strain>
    </source>
</reference>
<name>PEPB_ECO8A</name>
<feature type="chain" id="PRO_1000127005" description="Peptidase B">
    <location>
        <begin position="1"/>
        <end position="427"/>
    </location>
</feature>
<feature type="active site" evidence="1">
    <location>
        <position position="207"/>
    </location>
</feature>
<feature type="active site" evidence="1">
    <location>
        <position position="281"/>
    </location>
</feature>
<feature type="binding site" evidence="1">
    <location>
        <position position="195"/>
    </location>
    <ligand>
        <name>Mn(2+)</name>
        <dbReference type="ChEBI" id="CHEBI:29035"/>
        <label>2</label>
    </ligand>
</feature>
<feature type="binding site" evidence="1">
    <location>
        <position position="200"/>
    </location>
    <ligand>
        <name>Mn(2+)</name>
        <dbReference type="ChEBI" id="CHEBI:29035"/>
        <label>1</label>
    </ligand>
</feature>
<feature type="binding site" evidence="1">
    <location>
        <position position="200"/>
    </location>
    <ligand>
        <name>Mn(2+)</name>
        <dbReference type="ChEBI" id="CHEBI:29035"/>
        <label>2</label>
    </ligand>
</feature>
<feature type="binding site" evidence="1">
    <location>
        <position position="218"/>
    </location>
    <ligand>
        <name>Mn(2+)</name>
        <dbReference type="ChEBI" id="CHEBI:29035"/>
        <label>2</label>
    </ligand>
</feature>
<feature type="binding site" evidence="1">
    <location>
        <position position="277"/>
    </location>
    <ligand>
        <name>Mn(2+)</name>
        <dbReference type="ChEBI" id="CHEBI:29035"/>
        <label>1</label>
    </ligand>
</feature>
<feature type="binding site" evidence="1">
    <location>
        <position position="279"/>
    </location>
    <ligand>
        <name>Mn(2+)</name>
        <dbReference type="ChEBI" id="CHEBI:29035"/>
        <label>1</label>
    </ligand>
</feature>
<feature type="binding site" evidence="1">
    <location>
        <position position="279"/>
    </location>
    <ligand>
        <name>Mn(2+)</name>
        <dbReference type="ChEBI" id="CHEBI:29035"/>
        <label>2</label>
    </ligand>
</feature>
<gene>
    <name evidence="1" type="primary">pepB</name>
    <name type="ordered locus">ECIAI1_2575</name>
</gene>
<protein>
    <recommendedName>
        <fullName evidence="1">Peptidase B</fullName>
        <ecNumber evidence="1">3.4.11.23</ecNumber>
    </recommendedName>
    <alternativeName>
        <fullName evidence="1">Aminopeptidase B</fullName>
    </alternativeName>
</protein>
<evidence type="ECO:0000255" key="1">
    <source>
        <dbReference type="HAMAP-Rule" id="MF_00504"/>
    </source>
</evidence>